<proteinExistence type="inferred from homology"/>
<dbReference type="EC" id="6.3.5.-" evidence="1"/>
<dbReference type="EMBL" id="CP000708">
    <property type="protein sequence ID" value="ABQ61539.1"/>
    <property type="molecule type" value="Genomic_DNA"/>
</dbReference>
<dbReference type="RefSeq" id="WP_006012348.1">
    <property type="nucleotide sequence ID" value="NC_009505.1"/>
</dbReference>
<dbReference type="SMR" id="A5VQ81"/>
<dbReference type="GeneID" id="45124328"/>
<dbReference type="KEGG" id="bov:BOV_0896"/>
<dbReference type="HOGENOM" id="CLU_019240_0_0_5"/>
<dbReference type="PhylomeDB" id="A5VQ81"/>
<dbReference type="Proteomes" id="UP000006383">
    <property type="component" value="Chromosome I"/>
</dbReference>
<dbReference type="GO" id="GO:0050566">
    <property type="term" value="F:asparaginyl-tRNA synthase (glutamine-hydrolyzing) activity"/>
    <property type="evidence" value="ECO:0007669"/>
    <property type="project" value="RHEA"/>
</dbReference>
<dbReference type="GO" id="GO:0005524">
    <property type="term" value="F:ATP binding"/>
    <property type="evidence" value="ECO:0007669"/>
    <property type="project" value="UniProtKB-KW"/>
</dbReference>
<dbReference type="GO" id="GO:0050567">
    <property type="term" value="F:glutaminyl-tRNA synthase (glutamine-hydrolyzing) activity"/>
    <property type="evidence" value="ECO:0007669"/>
    <property type="project" value="UniProtKB-UniRule"/>
</dbReference>
<dbReference type="GO" id="GO:0070681">
    <property type="term" value="P:glutaminyl-tRNAGln biosynthesis via transamidation"/>
    <property type="evidence" value="ECO:0007669"/>
    <property type="project" value="TreeGrafter"/>
</dbReference>
<dbReference type="GO" id="GO:0006412">
    <property type="term" value="P:translation"/>
    <property type="evidence" value="ECO:0007669"/>
    <property type="project" value="UniProtKB-UniRule"/>
</dbReference>
<dbReference type="FunFam" id="1.10.10.410:FF:000001">
    <property type="entry name" value="Aspartyl/glutamyl-tRNA(Asn/Gln) amidotransferase subunit B"/>
    <property type="match status" value="1"/>
</dbReference>
<dbReference type="Gene3D" id="1.10.10.410">
    <property type="match status" value="1"/>
</dbReference>
<dbReference type="Gene3D" id="1.10.150.380">
    <property type="entry name" value="GatB domain, N-terminal subdomain"/>
    <property type="match status" value="1"/>
</dbReference>
<dbReference type="HAMAP" id="MF_00121">
    <property type="entry name" value="GatB"/>
    <property type="match status" value="1"/>
</dbReference>
<dbReference type="InterPro" id="IPR017959">
    <property type="entry name" value="Asn/Gln-tRNA_amidoTrfase_suB/E"/>
</dbReference>
<dbReference type="InterPro" id="IPR006075">
    <property type="entry name" value="Asn/Gln-tRNA_Trfase_suB/E_cat"/>
</dbReference>
<dbReference type="InterPro" id="IPR018027">
    <property type="entry name" value="Asn/Gln_amidotransferase"/>
</dbReference>
<dbReference type="InterPro" id="IPR003789">
    <property type="entry name" value="Asn/Gln_tRNA_amidoTrase-B-like"/>
</dbReference>
<dbReference type="InterPro" id="IPR004413">
    <property type="entry name" value="GatB"/>
</dbReference>
<dbReference type="InterPro" id="IPR042114">
    <property type="entry name" value="GatB_C_1"/>
</dbReference>
<dbReference type="InterPro" id="IPR023168">
    <property type="entry name" value="GatB_Yqey_C_2"/>
</dbReference>
<dbReference type="InterPro" id="IPR017958">
    <property type="entry name" value="Gln-tRNA_amidoTrfase_suB_CS"/>
</dbReference>
<dbReference type="InterPro" id="IPR014746">
    <property type="entry name" value="Gln_synth/guanido_kin_cat_dom"/>
</dbReference>
<dbReference type="NCBIfam" id="TIGR00133">
    <property type="entry name" value="gatB"/>
    <property type="match status" value="1"/>
</dbReference>
<dbReference type="NCBIfam" id="NF004012">
    <property type="entry name" value="PRK05477.1-2"/>
    <property type="match status" value="1"/>
</dbReference>
<dbReference type="NCBIfam" id="NF004014">
    <property type="entry name" value="PRK05477.1-4"/>
    <property type="match status" value="1"/>
</dbReference>
<dbReference type="NCBIfam" id="NF004015">
    <property type="entry name" value="PRK05477.1-5"/>
    <property type="match status" value="1"/>
</dbReference>
<dbReference type="PANTHER" id="PTHR11659">
    <property type="entry name" value="GLUTAMYL-TRNA GLN AMIDOTRANSFERASE SUBUNIT B MITOCHONDRIAL AND PROKARYOTIC PET112-RELATED"/>
    <property type="match status" value="1"/>
</dbReference>
<dbReference type="PANTHER" id="PTHR11659:SF0">
    <property type="entry name" value="GLUTAMYL-TRNA(GLN) AMIDOTRANSFERASE SUBUNIT B, MITOCHONDRIAL"/>
    <property type="match status" value="1"/>
</dbReference>
<dbReference type="Pfam" id="PF02934">
    <property type="entry name" value="GatB_N"/>
    <property type="match status" value="1"/>
</dbReference>
<dbReference type="Pfam" id="PF02637">
    <property type="entry name" value="GatB_Yqey"/>
    <property type="match status" value="1"/>
</dbReference>
<dbReference type="SMART" id="SM00845">
    <property type="entry name" value="GatB_Yqey"/>
    <property type="match status" value="1"/>
</dbReference>
<dbReference type="SUPFAM" id="SSF89095">
    <property type="entry name" value="GatB/YqeY motif"/>
    <property type="match status" value="1"/>
</dbReference>
<dbReference type="SUPFAM" id="SSF55931">
    <property type="entry name" value="Glutamine synthetase/guanido kinase"/>
    <property type="match status" value="1"/>
</dbReference>
<dbReference type="PROSITE" id="PS01234">
    <property type="entry name" value="GATB"/>
    <property type="match status" value="1"/>
</dbReference>
<protein>
    <recommendedName>
        <fullName evidence="1">Aspartyl/glutamyl-tRNA(Asn/Gln) amidotransferase subunit B</fullName>
        <shortName evidence="1">Asp/Glu-ADT subunit B</shortName>
        <ecNumber evidence="1">6.3.5.-</ecNumber>
    </recommendedName>
</protein>
<comment type="function">
    <text evidence="1">Allows the formation of correctly charged Asn-tRNA(Asn) or Gln-tRNA(Gln) through the transamidation of misacylated Asp-tRNA(Asn) or Glu-tRNA(Gln) in organisms which lack either or both of asparaginyl-tRNA or glutaminyl-tRNA synthetases. The reaction takes place in the presence of glutamine and ATP through an activated phospho-Asp-tRNA(Asn) or phospho-Glu-tRNA(Gln).</text>
</comment>
<comment type="catalytic activity">
    <reaction evidence="1">
        <text>L-glutamyl-tRNA(Gln) + L-glutamine + ATP + H2O = L-glutaminyl-tRNA(Gln) + L-glutamate + ADP + phosphate + H(+)</text>
        <dbReference type="Rhea" id="RHEA:17521"/>
        <dbReference type="Rhea" id="RHEA-COMP:9681"/>
        <dbReference type="Rhea" id="RHEA-COMP:9684"/>
        <dbReference type="ChEBI" id="CHEBI:15377"/>
        <dbReference type="ChEBI" id="CHEBI:15378"/>
        <dbReference type="ChEBI" id="CHEBI:29985"/>
        <dbReference type="ChEBI" id="CHEBI:30616"/>
        <dbReference type="ChEBI" id="CHEBI:43474"/>
        <dbReference type="ChEBI" id="CHEBI:58359"/>
        <dbReference type="ChEBI" id="CHEBI:78520"/>
        <dbReference type="ChEBI" id="CHEBI:78521"/>
        <dbReference type="ChEBI" id="CHEBI:456216"/>
    </reaction>
</comment>
<comment type="catalytic activity">
    <reaction evidence="1">
        <text>L-aspartyl-tRNA(Asn) + L-glutamine + ATP + H2O = L-asparaginyl-tRNA(Asn) + L-glutamate + ADP + phosphate + 2 H(+)</text>
        <dbReference type="Rhea" id="RHEA:14513"/>
        <dbReference type="Rhea" id="RHEA-COMP:9674"/>
        <dbReference type="Rhea" id="RHEA-COMP:9677"/>
        <dbReference type="ChEBI" id="CHEBI:15377"/>
        <dbReference type="ChEBI" id="CHEBI:15378"/>
        <dbReference type="ChEBI" id="CHEBI:29985"/>
        <dbReference type="ChEBI" id="CHEBI:30616"/>
        <dbReference type="ChEBI" id="CHEBI:43474"/>
        <dbReference type="ChEBI" id="CHEBI:58359"/>
        <dbReference type="ChEBI" id="CHEBI:78515"/>
        <dbReference type="ChEBI" id="CHEBI:78516"/>
        <dbReference type="ChEBI" id="CHEBI:456216"/>
    </reaction>
</comment>
<comment type="subunit">
    <text evidence="1">Heterotrimer of A, B and C subunits.</text>
</comment>
<comment type="similarity">
    <text evidence="1">Belongs to the GatB/GatE family. GatB subfamily.</text>
</comment>
<feature type="chain" id="PRO_1000015939" description="Aspartyl/glutamyl-tRNA(Asn/Gln) amidotransferase subunit B">
    <location>
        <begin position="1"/>
        <end position="500"/>
    </location>
</feature>
<accession>A5VQ81</accession>
<reference key="1">
    <citation type="journal article" date="2009" name="PLoS ONE">
        <title>Genome degradation in Brucella ovis corresponds with narrowing of its host range and tissue tropism.</title>
        <authorList>
            <person name="Tsolis R.M."/>
            <person name="Seshadri R."/>
            <person name="Santos R.L."/>
            <person name="Sangari F.J."/>
            <person name="Lobo J.M."/>
            <person name="de Jong M.F."/>
            <person name="Ren Q."/>
            <person name="Myers G."/>
            <person name="Brinkac L.M."/>
            <person name="Nelson W.C."/>
            <person name="Deboy R.T."/>
            <person name="Angiuoli S."/>
            <person name="Khouri H."/>
            <person name="Dimitrov G."/>
            <person name="Robinson J.R."/>
            <person name="Mulligan S."/>
            <person name="Walker R.L."/>
            <person name="Elzer P.E."/>
            <person name="Hassan K.A."/>
            <person name="Paulsen I.T."/>
        </authorList>
    </citation>
    <scope>NUCLEOTIDE SEQUENCE [LARGE SCALE GENOMIC DNA]</scope>
    <source>
        <strain>ATCC 25840 / 63/290 / NCTC 10512</strain>
    </source>
</reference>
<keyword id="KW-0067">ATP-binding</keyword>
<keyword id="KW-0436">Ligase</keyword>
<keyword id="KW-0547">Nucleotide-binding</keyword>
<keyword id="KW-0648">Protein biosynthesis</keyword>
<evidence type="ECO:0000255" key="1">
    <source>
        <dbReference type="HAMAP-Rule" id="MF_00121"/>
    </source>
</evidence>
<name>GATB_BRUO2</name>
<gene>
    <name evidence="1" type="primary">gatB</name>
    <name type="ordered locus">BOV_0896</name>
</gene>
<organism>
    <name type="scientific">Brucella ovis (strain ATCC 25840 / 63/290 / NCTC 10512)</name>
    <dbReference type="NCBI Taxonomy" id="444178"/>
    <lineage>
        <taxon>Bacteria</taxon>
        <taxon>Pseudomonadati</taxon>
        <taxon>Pseudomonadota</taxon>
        <taxon>Alphaproteobacteria</taxon>
        <taxon>Hyphomicrobiales</taxon>
        <taxon>Brucellaceae</taxon>
        <taxon>Brucella/Ochrobactrum group</taxon>
        <taxon>Brucella</taxon>
    </lineage>
</organism>
<sequence>MSIIDTRTPEPKRFISGATGDWEVVIGMEVHAQVTSESKLFSGASTAFGAEPNSNVSLVDAAMPGMLPVINLECVRQAVRTGIGLNAQINLKSVFDRKNYFYPDLPQGYQISQFKQPIVGEGKIMISVGPDNKGQFEDVEIGIERLHLEQDAGKSMHDQHPTMSYVDLNRSGVALMEIVSKPDLRSSDEARAYLTKLRTIVRYLGTCDGNMDEGSMRADVNVSVHRPGGEFGTRCEIKNVNSIRFVGQAIEYEARRQIAILEDGGVIDQETRLFDPVKGETRSMRSKEEAHDYRYFPDPDLLPLEFNQAFVDALAAKLPELPDVKKQRLVETLGISVYDASILVTEKAIADYYEAVAEGRDGKAAANWVINDLLGALNKAGKDIEESPISPAQLGAIIDLIKEGTISGKIAKDLFEIVWNEGGDPKKLVEERGMKQVTDTGAIEKAVDDVIAANPDKVEQAKAKPTLAGWFVGQVMKAMGGKANPQAVNELVKSKLGIEE</sequence>